<reference evidence="12" key="1">
    <citation type="journal article" date="1999" name="J. Biol. Chem.">
        <title>Genomic structure and expression of the mouse growth factor receptor related to tyrosine kinases (Ryk).</title>
        <authorList>
            <person name="Halford M.M."/>
            <person name="Oates A.C."/>
            <person name="Hibbs M.L."/>
            <person name="Wilks A.F."/>
            <person name="Stacker S.A."/>
        </authorList>
    </citation>
    <scope>NUCLEOTIDE SEQUENCE [MRNA]</scope>
    <source>
        <strain evidence="12">Bristol N2</strain>
    </source>
</reference>
<reference evidence="10" key="2">
    <citation type="journal article" date="2004" name="Cell">
        <title>C. elegans LIN-18 is a Ryk ortholog and functions in parallel to LIN-17/Frizzled in Wnt signaling.</title>
        <authorList>
            <person name="Inoue T."/>
            <person name="Oz H.S."/>
            <person name="Wiland D."/>
            <person name="Gharib S."/>
            <person name="Deshpande R."/>
            <person name="Hill R.J."/>
            <person name="Katz W.S."/>
            <person name="Sternberg P.W."/>
        </authorList>
    </citation>
    <scope>NUCLEOTIDE SEQUENCE [MRNA]</scope>
    <scope>FUNCTION</scope>
    <scope>SUBCELLULAR LOCATION</scope>
    <scope>DEVELOPMENTAL STAGE</scope>
    <scope>MUTAGENESIS OF 38-GLU--LEU-39</scope>
</reference>
<reference evidence="13" key="3">
    <citation type="journal article" date="1998" name="Science">
        <title>Genome sequence of the nematode C. elegans: a platform for investigating biology.</title>
        <authorList>
            <consortium name="The C. elegans sequencing consortium"/>
        </authorList>
    </citation>
    <scope>NUCLEOTIDE SEQUENCE [LARGE SCALE GENOMIC DNA]</scope>
    <source>
        <strain evidence="13">Bristol N2</strain>
    </source>
</reference>
<reference evidence="10" key="4">
    <citation type="journal article" date="2005" name="Dev. Biol.">
        <title>lin-17/Frizzled and lin-18 regulate POP-1/TCF-1 localization and cell type specification during C. elegans vulval development.</title>
        <authorList>
            <person name="Deshpande R."/>
            <person name="Inoue T."/>
            <person name="Priess J.R."/>
            <person name="Hill R.J."/>
        </authorList>
    </citation>
    <scope>FUNCTION</scope>
</reference>
<reference evidence="10" key="5">
    <citation type="journal article" date="2008" name="Genetics">
        <title>Complex network of Wnt signaling regulates neuronal migrations during Caenorhabditis elegans development.</title>
        <authorList>
            <person name="Zinovyeva A.Y."/>
            <person name="Yamamoto Y."/>
            <person name="Sawa H."/>
            <person name="Forrester W.C."/>
        </authorList>
    </citation>
    <scope>FUNCTION</scope>
</reference>
<reference key="6">
    <citation type="journal article" date="2020" name="Elife">
        <title>The CHORD protein CHP-1 regulates EGF receptor trafficking and signaling in C. elegans and in human cells.</title>
        <authorList>
            <person name="Haag A."/>
            <person name="Walser M."/>
            <person name="Henggeler A."/>
            <person name="Hajnal A."/>
        </authorList>
    </citation>
    <scope>SUBCELLULAR LOCATION</scope>
</reference>
<sequence>MILRYLIFFAQLWALCLANVNMFISKEEMNRTFGVKAELNYIEMGNVSSYSTKFHYRVMANIDYLSFTWNAVGIVHYEVYVESDDSSVLPIVRIPLKGTVPESLQDFTVEYRCAGHRSGQFAVSLYFTFKYGNKEPLKVKLRQEKICASRDGRRGLNGGYEGHEVDDTDSIDKAFFVIICIAAAFLLIVAATLICYFKRSKKEDMIPTRLPTSFRNSLKSTKSAQPFLLSTPRDGPPTLSAISSAPCSSSSASGNSIIPSKPRNIDVRRALLQLYQDRDAFQSLPLDMEGTFGEVRYAIWRQVDDVLNGDVDDEEDTFCNQEAVYTKTLKNNASPIQLDRFLSDALLFYNITPHQNLSQVACVASFGRFDRPETVTDFPLVCYRHQGFGNLKKFLTICRHGDKTKGAQTLRTHQLVSLATQVSSAVAHIHKYRIVHNDIAARNCLIAEVNGRLQVQLCDSALSRDLFPADYHCLGDNENRPLKWMSPEAIANELYSSAADVWSLGVLLWELMSLGGSPHAEIDPEEVYTMILKGKRLQQPNNCPDQLYEVMLCCWRVLSEDRPSSEQVVHGLRDFNIQLSQYI</sequence>
<organism evidence="13">
    <name type="scientific">Caenorhabditis elegans</name>
    <dbReference type="NCBI Taxonomy" id="6239"/>
    <lineage>
        <taxon>Eukaryota</taxon>
        <taxon>Metazoa</taxon>
        <taxon>Ecdysozoa</taxon>
        <taxon>Nematoda</taxon>
        <taxon>Chromadorea</taxon>
        <taxon>Rhabditida</taxon>
        <taxon>Rhabditina</taxon>
        <taxon>Rhabditomorpha</taxon>
        <taxon>Rhabditoidea</taxon>
        <taxon>Rhabditidae</taxon>
        <taxon>Peloderinae</taxon>
        <taxon>Caenorhabditis</taxon>
    </lineage>
</organism>
<dbReference type="EMBL" id="AF133217">
    <property type="protein sequence ID" value="AAD24877.1"/>
    <property type="molecule type" value="mRNA"/>
</dbReference>
<dbReference type="EMBL" id="BX284606">
    <property type="protein sequence ID" value="CCD64652.1"/>
    <property type="molecule type" value="Genomic_DNA"/>
</dbReference>
<dbReference type="RefSeq" id="NP_508684.4">
    <property type="nucleotide sequence ID" value="NM_076283.4"/>
</dbReference>
<dbReference type="SMR" id="G5EGT9"/>
<dbReference type="FunCoup" id="G5EGT9">
    <property type="interactions" value="1134"/>
</dbReference>
<dbReference type="STRING" id="6239.C16B8.1.2"/>
<dbReference type="GlyCosmos" id="G5EGT9">
    <property type="glycosylation" value="2 sites, No reported glycans"/>
</dbReference>
<dbReference type="PaxDb" id="6239-C16B8.1.2"/>
<dbReference type="PeptideAtlas" id="G5EGT9"/>
<dbReference type="EnsemblMetazoa" id="C16B8.1.1">
    <property type="protein sequence ID" value="C16B8.1.1"/>
    <property type="gene ID" value="WBGene00003007"/>
</dbReference>
<dbReference type="GeneID" id="180679"/>
<dbReference type="KEGG" id="cel:CELE_C16B8.1"/>
<dbReference type="AGR" id="WB:WBGene00003007"/>
<dbReference type="CTD" id="180679"/>
<dbReference type="WormBase" id="C16B8.1">
    <property type="protein sequence ID" value="CE44782"/>
    <property type="gene ID" value="WBGene00003007"/>
    <property type="gene designation" value="lin-18"/>
</dbReference>
<dbReference type="eggNOG" id="KOG1024">
    <property type="taxonomic scope" value="Eukaryota"/>
</dbReference>
<dbReference type="GeneTree" id="ENSGT00940000155119"/>
<dbReference type="HOGENOM" id="CLU_000288_7_36_1"/>
<dbReference type="InParanoid" id="G5EGT9"/>
<dbReference type="OMA" id="YCWAMSA"/>
<dbReference type="OrthoDB" id="6071166at2759"/>
<dbReference type="PhylomeDB" id="G5EGT9"/>
<dbReference type="PRO" id="PR:G5EGT9"/>
<dbReference type="Proteomes" id="UP000001940">
    <property type="component" value="Chromosome X"/>
</dbReference>
<dbReference type="Bgee" id="WBGene00003007">
    <property type="expression patterns" value="Expressed in larva and 3 other cell types or tissues"/>
</dbReference>
<dbReference type="GO" id="GO:0016323">
    <property type="term" value="C:basolateral plasma membrane"/>
    <property type="evidence" value="ECO:0007669"/>
    <property type="project" value="UniProtKB-SubCell"/>
</dbReference>
<dbReference type="GO" id="GO:0005737">
    <property type="term" value="C:cytoplasm"/>
    <property type="evidence" value="ECO:0000314"/>
    <property type="project" value="WormBase"/>
</dbReference>
<dbReference type="GO" id="GO:0005634">
    <property type="term" value="C:nucleus"/>
    <property type="evidence" value="ECO:0000314"/>
    <property type="project" value="WormBase"/>
</dbReference>
<dbReference type="GO" id="GO:0005886">
    <property type="term" value="C:plasma membrane"/>
    <property type="evidence" value="ECO:0000314"/>
    <property type="project" value="WormBase"/>
</dbReference>
<dbReference type="GO" id="GO:0043235">
    <property type="term" value="C:receptor complex"/>
    <property type="evidence" value="ECO:0000318"/>
    <property type="project" value="GO_Central"/>
</dbReference>
<dbReference type="GO" id="GO:0005524">
    <property type="term" value="F:ATP binding"/>
    <property type="evidence" value="ECO:0007669"/>
    <property type="project" value="UniProtKB-KW"/>
</dbReference>
<dbReference type="GO" id="GO:0004672">
    <property type="term" value="F:protein kinase activity"/>
    <property type="evidence" value="ECO:0007669"/>
    <property type="project" value="InterPro"/>
</dbReference>
<dbReference type="GO" id="GO:0045167">
    <property type="term" value="P:asymmetric protein localization involved in cell fate determination"/>
    <property type="evidence" value="ECO:0000315"/>
    <property type="project" value="WormBase"/>
</dbReference>
<dbReference type="GO" id="GO:0007409">
    <property type="term" value="P:axonogenesis"/>
    <property type="evidence" value="ECO:0000318"/>
    <property type="project" value="GO_Central"/>
</dbReference>
<dbReference type="GO" id="GO:0007169">
    <property type="term" value="P:cell surface receptor protein tyrosine kinase signaling pathway"/>
    <property type="evidence" value="ECO:0000318"/>
    <property type="project" value="GO_Central"/>
</dbReference>
<dbReference type="GO" id="GO:0048560">
    <property type="term" value="P:establishment of anatomical structure orientation"/>
    <property type="evidence" value="ECO:0000315"/>
    <property type="project" value="WormBase"/>
</dbReference>
<dbReference type="GO" id="GO:0002009">
    <property type="term" value="P:morphogenesis of an epithelium"/>
    <property type="evidence" value="ECO:0000315"/>
    <property type="project" value="WormBase"/>
</dbReference>
<dbReference type="GO" id="GO:0009949">
    <property type="term" value="P:polarity specification of anterior/posterior axis"/>
    <property type="evidence" value="ECO:0000315"/>
    <property type="project" value="WormBase"/>
</dbReference>
<dbReference type="GO" id="GO:0010085">
    <property type="term" value="P:polarity specification of proximal/distal axis"/>
    <property type="evidence" value="ECO:0000315"/>
    <property type="project" value="WormBase"/>
</dbReference>
<dbReference type="GO" id="GO:1905488">
    <property type="term" value="P:positive regulation of anterior/posterior axon guidance"/>
    <property type="evidence" value="ECO:0000316"/>
    <property type="project" value="UniProtKB"/>
</dbReference>
<dbReference type="GO" id="GO:1905485">
    <property type="term" value="P:positive regulation of motor neuron migration"/>
    <property type="evidence" value="ECO:0000316"/>
    <property type="project" value="UniProtKB"/>
</dbReference>
<dbReference type="GO" id="GO:0010976">
    <property type="term" value="P:positive regulation of neuron projection development"/>
    <property type="evidence" value="ECO:0000318"/>
    <property type="project" value="GO_Central"/>
</dbReference>
<dbReference type="GO" id="GO:0051897">
    <property type="term" value="P:positive regulation of phosphatidylinositol 3-kinase/protein kinase B signal transduction"/>
    <property type="evidence" value="ECO:0000318"/>
    <property type="project" value="GO_Central"/>
</dbReference>
<dbReference type="GO" id="GO:1905491">
    <property type="term" value="P:positive regulation of sensory neuron axon guidance"/>
    <property type="evidence" value="ECO:0000316"/>
    <property type="project" value="UniProtKB"/>
</dbReference>
<dbReference type="GO" id="GO:0009786">
    <property type="term" value="P:regulation of asymmetric cell division"/>
    <property type="evidence" value="ECO:0000315"/>
    <property type="project" value="WormBase"/>
</dbReference>
<dbReference type="GO" id="GO:1904937">
    <property type="term" value="P:sensory neuron migration"/>
    <property type="evidence" value="ECO:0000315"/>
    <property type="project" value="UniProtKB"/>
</dbReference>
<dbReference type="GO" id="GO:0040025">
    <property type="term" value="P:vulval development"/>
    <property type="evidence" value="ECO:0000315"/>
    <property type="project" value="WormBase"/>
</dbReference>
<dbReference type="GO" id="GO:0016055">
    <property type="term" value="P:Wnt signaling pathway"/>
    <property type="evidence" value="ECO:0007669"/>
    <property type="project" value="UniProtKB-KW"/>
</dbReference>
<dbReference type="CDD" id="cd05043">
    <property type="entry name" value="PTK_Ryk"/>
    <property type="match status" value="1"/>
</dbReference>
<dbReference type="Gene3D" id="1.10.510.10">
    <property type="entry name" value="Transferase(Phosphotransferase) domain 1"/>
    <property type="match status" value="1"/>
</dbReference>
<dbReference type="Gene3D" id="2.60.40.2170">
    <property type="entry name" value="Wnt, WIF domain"/>
    <property type="match status" value="1"/>
</dbReference>
<dbReference type="InterPro" id="IPR011009">
    <property type="entry name" value="Kinase-like_dom_sf"/>
</dbReference>
<dbReference type="InterPro" id="IPR000719">
    <property type="entry name" value="Prot_kinase_dom"/>
</dbReference>
<dbReference type="InterPro" id="IPR050122">
    <property type="entry name" value="RTK"/>
</dbReference>
<dbReference type="InterPro" id="IPR001245">
    <property type="entry name" value="Ser-Thr/Tyr_kinase_cat_dom"/>
</dbReference>
<dbReference type="InterPro" id="IPR008266">
    <property type="entry name" value="Tyr_kinase_AS"/>
</dbReference>
<dbReference type="InterPro" id="IPR003306">
    <property type="entry name" value="WIF"/>
</dbReference>
<dbReference type="InterPro" id="IPR038677">
    <property type="entry name" value="WIF_sf"/>
</dbReference>
<dbReference type="PANTHER" id="PTHR24416">
    <property type="entry name" value="TYROSINE-PROTEIN KINASE RECEPTOR"/>
    <property type="match status" value="1"/>
</dbReference>
<dbReference type="PANTHER" id="PTHR24416:SF349">
    <property type="entry name" value="TYROSINE-PROTEIN KINASE RYK"/>
    <property type="match status" value="1"/>
</dbReference>
<dbReference type="Pfam" id="PF07714">
    <property type="entry name" value="PK_Tyr_Ser-Thr"/>
    <property type="match status" value="1"/>
</dbReference>
<dbReference type="Pfam" id="PF02019">
    <property type="entry name" value="WIF"/>
    <property type="match status" value="1"/>
</dbReference>
<dbReference type="PRINTS" id="PR00109">
    <property type="entry name" value="TYRKINASE"/>
</dbReference>
<dbReference type="SMART" id="SM00469">
    <property type="entry name" value="WIF"/>
    <property type="match status" value="1"/>
</dbReference>
<dbReference type="SUPFAM" id="SSF56112">
    <property type="entry name" value="Protein kinase-like (PK-like)"/>
    <property type="match status" value="1"/>
</dbReference>
<dbReference type="PROSITE" id="PS50011">
    <property type="entry name" value="PROTEIN_KINASE_DOM"/>
    <property type="match status" value="1"/>
</dbReference>
<dbReference type="PROSITE" id="PS00109">
    <property type="entry name" value="PROTEIN_KINASE_TYR"/>
    <property type="match status" value="1"/>
</dbReference>
<dbReference type="PROSITE" id="PS50814">
    <property type="entry name" value="WIF"/>
    <property type="match status" value="1"/>
</dbReference>
<proteinExistence type="evidence at protein level"/>
<protein>
    <recommendedName>
        <fullName evidence="1">Inactive tyrosine-protein kinase RYK</fullName>
    </recommendedName>
    <alternativeName>
        <fullName evidence="14">Abnormal cell lineage protein 18</fullName>
    </alternativeName>
</protein>
<feature type="signal peptide" evidence="2">
    <location>
        <begin position="1"/>
        <end position="18"/>
    </location>
</feature>
<feature type="chain" id="PRO_0000434601" description="Inactive tyrosine-protein kinase RYK" evidence="10">
    <location>
        <begin position="19"/>
        <end position="583"/>
    </location>
</feature>
<feature type="topological domain" description="Extracellular" evidence="2">
    <location>
        <begin position="19"/>
        <end position="173"/>
    </location>
</feature>
<feature type="transmembrane region" description="Helical" evidence="2">
    <location>
        <begin position="174"/>
        <end position="194"/>
    </location>
</feature>
<feature type="topological domain" description="Cytoplasmic" evidence="2">
    <location>
        <begin position="195"/>
        <end position="583"/>
    </location>
</feature>
<feature type="domain" description="WIF" evidence="4">
    <location>
        <begin position="22"/>
        <end position="147"/>
    </location>
</feature>
<feature type="domain" description="Protein kinase" evidence="3">
    <location>
        <begin position="281"/>
        <end position="583"/>
    </location>
</feature>
<feature type="binding site" evidence="3">
    <location>
        <begin position="287"/>
        <end position="295"/>
    </location>
    <ligand>
        <name>ATP</name>
        <dbReference type="ChEBI" id="CHEBI:30616"/>
    </ligand>
</feature>
<feature type="binding site" evidence="3">
    <location>
        <position position="327"/>
    </location>
    <ligand>
        <name>ATP</name>
        <dbReference type="ChEBI" id="CHEBI:30616"/>
    </ligand>
</feature>
<feature type="glycosylation site" description="N-linked (GlcNAc...) asparagine" evidence="5">
    <location>
        <position position="30"/>
    </location>
</feature>
<feature type="glycosylation site" description="N-linked (GlcNAc...) asparagine" evidence="5">
    <location>
        <position position="46"/>
    </location>
</feature>
<feature type="disulfide bond" evidence="4">
    <location>
        <begin position="113"/>
        <end position="147"/>
    </location>
</feature>
<feature type="mutagenesis site" description="Formation of an ectopic vulval lumen." evidence="6">
    <location>
        <begin position="38"/>
        <end position="39"/>
    </location>
</feature>
<comment type="function">
    <text evidence="1 6 7 8">Has no detectable kinase activity in vitro and is unlikely to function as a tyrosine kinase in vivo (By similarity). Receptor which may act as a receptor for Wnt ligand mom-2. Plays a role in controlling P7.p vulva precursor cell lineage orientation during vulva development (PubMed:15369677, PubMed:15649465). Regulates pop-1 asymmetric distribution in P7.p and its daughter cells (PubMed:15649465). Plays a role in the migration of ALM neurons during embryogenesis (PubMed:18622031).</text>
</comment>
<comment type="subcellular location">
    <subcellularLocation>
        <location evidence="6">Cell membrane</location>
        <topology evidence="10">Single-pass type I membrane protein</topology>
    </subcellularLocation>
    <subcellularLocation>
        <location evidence="9">Basolateral cell membrane</location>
        <topology evidence="2">Single-pass type I membrane protein</topology>
    </subcellularLocation>
    <text evidence="9">Localizes to the basolateral cell membrane of vulval precursor cells.</text>
</comment>
<comment type="developmental stage">
    <text evidence="6">Expressed in vulva cell precursors (VPC) P5.p, P6.p and P7.p, and their descendants during L3 and L4 larval stages.</text>
</comment>
<comment type="similarity">
    <text evidence="3">Belongs to the protein kinase superfamily. Tyr protein kinase family.</text>
</comment>
<comment type="caution">
    <text evidence="1 11">May lack kinase activity. The human ortholog has been shown to have impaired catalytic activity with an inability to undergo autophosphorylation or to phosphorylate substrates.</text>
</comment>
<name>RYK_CAEEL</name>
<keyword id="KW-0067">ATP-binding</keyword>
<keyword id="KW-1003">Cell membrane</keyword>
<keyword id="KW-1015">Disulfide bond</keyword>
<keyword id="KW-0325">Glycoprotein</keyword>
<keyword id="KW-0472">Membrane</keyword>
<keyword id="KW-0524">Neurogenesis</keyword>
<keyword id="KW-0547">Nucleotide-binding</keyword>
<keyword id="KW-0675">Receptor</keyword>
<keyword id="KW-1185">Reference proteome</keyword>
<keyword id="KW-0732">Signal</keyword>
<keyword id="KW-0812">Transmembrane</keyword>
<keyword id="KW-1133">Transmembrane helix</keyword>
<keyword id="KW-0879">Wnt signaling pathway</keyword>
<evidence type="ECO:0000250" key="1">
    <source>
        <dbReference type="UniProtKB" id="P34925"/>
    </source>
</evidence>
<evidence type="ECO:0000255" key="2"/>
<evidence type="ECO:0000255" key="3">
    <source>
        <dbReference type="PROSITE-ProRule" id="PRU00159"/>
    </source>
</evidence>
<evidence type="ECO:0000255" key="4">
    <source>
        <dbReference type="PROSITE-ProRule" id="PRU00222"/>
    </source>
</evidence>
<evidence type="ECO:0000255" key="5">
    <source>
        <dbReference type="PROSITE-ProRule" id="PRU00498"/>
    </source>
</evidence>
<evidence type="ECO:0000269" key="6">
    <source>
    </source>
</evidence>
<evidence type="ECO:0000269" key="7">
    <source>
    </source>
</evidence>
<evidence type="ECO:0000269" key="8">
    <source>
    </source>
</evidence>
<evidence type="ECO:0000269" key="9">
    <source>
    </source>
</evidence>
<evidence type="ECO:0000305" key="10"/>
<evidence type="ECO:0000305" key="11">
    <source>
    </source>
</evidence>
<evidence type="ECO:0000312" key="12">
    <source>
        <dbReference type="EMBL" id="AAD24877.1"/>
    </source>
</evidence>
<evidence type="ECO:0000312" key="13">
    <source>
        <dbReference type="Proteomes" id="UP000001940"/>
    </source>
</evidence>
<evidence type="ECO:0000312" key="14">
    <source>
        <dbReference type="WormBase" id="C16B8.1"/>
    </source>
</evidence>
<gene>
    <name evidence="14" type="primary">lin-18</name>
    <name evidence="12" type="synonym">ryk</name>
    <name evidence="14" type="ORF">C16B8.1</name>
</gene>
<accession>G5EGT9</accession>